<accession>Q92C75</accession>
<name>XERC_LISIN</name>
<dbReference type="EMBL" id="AL596168">
    <property type="protein sequence ID" value="CAC96547.1"/>
    <property type="molecule type" value="Genomic_DNA"/>
</dbReference>
<dbReference type="PIR" id="AC1597">
    <property type="entry name" value="AC1597"/>
</dbReference>
<dbReference type="RefSeq" id="WP_010990921.1">
    <property type="nucleotide sequence ID" value="NC_003212.1"/>
</dbReference>
<dbReference type="SMR" id="Q92C75"/>
<dbReference type="STRING" id="272626.gene:17565647"/>
<dbReference type="GeneID" id="93234696"/>
<dbReference type="KEGG" id="lin:codV"/>
<dbReference type="eggNOG" id="COG4974">
    <property type="taxonomic scope" value="Bacteria"/>
</dbReference>
<dbReference type="HOGENOM" id="CLU_027562_9_0_9"/>
<dbReference type="OrthoDB" id="9801717at2"/>
<dbReference type="Proteomes" id="UP000002513">
    <property type="component" value="Chromosome"/>
</dbReference>
<dbReference type="GO" id="GO:0005737">
    <property type="term" value="C:cytoplasm"/>
    <property type="evidence" value="ECO:0007669"/>
    <property type="project" value="UniProtKB-SubCell"/>
</dbReference>
<dbReference type="GO" id="GO:0003677">
    <property type="term" value="F:DNA binding"/>
    <property type="evidence" value="ECO:0007669"/>
    <property type="project" value="UniProtKB-KW"/>
</dbReference>
<dbReference type="GO" id="GO:0009037">
    <property type="term" value="F:tyrosine-based site-specific recombinase activity"/>
    <property type="evidence" value="ECO:0007669"/>
    <property type="project" value="UniProtKB-UniRule"/>
</dbReference>
<dbReference type="GO" id="GO:0051301">
    <property type="term" value="P:cell division"/>
    <property type="evidence" value="ECO:0007669"/>
    <property type="project" value="UniProtKB-KW"/>
</dbReference>
<dbReference type="GO" id="GO:0007059">
    <property type="term" value="P:chromosome segregation"/>
    <property type="evidence" value="ECO:0007669"/>
    <property type="project" value="UniProtKB-UniRule"/>
</dbReference>
<dbReference type="GO" id="GO:0006313">
    <property type="term" value="P:DNA transposition"/>
    <property type="evidence" value="ECO:0007669"/>
    <property type="project" value="UniProtKB-UniRule"/>
</dbReference>
<dbReference type="CDD" id="cd00798">
    <property type="entry name" value="INT_XerDC_C"/>
    <property type="match status" value="1"/>
</dbReference>
<dbReference type="Gene3D" id="1.10.150.130">
    <property type="match status" value="1"/>
</dbReference>
<dbReference type="Gene3D" id="1.10.443.10">
    <property type="entry name" value="Intergrase catalytic core"/>
    <property type="match status" value="1"/>
</dbReference>
<dbReference type="HAMAP" id="MF_01808">
    <property type="entry name" value="Recomb_XerC_XerD"/>
    <property type="match status" value="1"/>
</dbReference>
<dbReference type="InterPro" id="IPR044068">
    <property type="entry name" value="CB"/>
</dbReference>
<dbReference type="InterPro" id="IPR011010">
    <property type="entry name" value="DNA_brk_join_enz"/>
</dbReference>
<dbReference type="InterPro" id="IPR013762">
    <property type="entry name" value="Integrase-like_cat_sf"/>
</dbReference>
<dbReference type="InterPro" id="IPR002104">
    <property type="entry name" value="Integrase_catalytic"/>
</dbReference>
<dbReference type="InterPro" id="IPR010998">
    <property type="entry name" value="Integrase_recombinase_N"/>
</dbReference>
<dbReference type="InterPro" id="IPR004107">
    <property type="entry name" value="Integrase_SAM-like_N"/>
</dbReference>
<dbReference type="InterPro" id="IPR011931">
    <property type="entry name" value="Recomb_XerC"/>
</dbReference>
<dbReference type="InterPro" id="IPR023009">
    <property type="entry name" value="Tyrosine_recombinase_XerC/XerD"/>
</dbReference>
<dbReference type="InterPro" id="IPR050090">
    <property type="entry name" value="Tyrosine_recombinase_XerCD"/>
</dbReference>
<dbReference type="NCBIfam" id="NF001399">
    <property type="entry name" value="PRK00283.1"/>
    <property type="match status" value="1"/>
</dbReference>
<dbReference type="NCBIfam" id="TIGR02224">
    <property type="entry name" value="recomb_XerC"/>
    <property type="match status" value="1"/>
</dbReference>
<dbReference type="PANTHER" id="PTHR30349">
    <property type="entry name" value="PHAGE INTEGRASE-RELATED"/>
    <property type="match status" value="1"/>
</dbReference>
<dbReference type="PANTHER" id="PTHR30349:SF77">
    <property type="entry name" value="TYROSINE RECOMBINASE XERC"/>
    <property type="match status" value="1"/>
</dbReference>
<dbReference type="Pfam" id="PF02899">
    <property type="entry name" value="Phage_int_SAM_1"/>
    <property type="match status" value="1"/>
</dbReference>
<dbReference type="Pfam" id="PF00589">
    <property type="entry name" value="Phage_integrase"/>
    <property type="match status" value="1"/>
</dbReference>
<dbReference type="SUPFAM" id="SSF56349">
    <property type="entry name" value="DNA breaking-rejoining enzymes"/>
    <property type="match status" value="1"/>
</dbReference>
<dbReference type="PROSITE" id="PS51900">
    <property type="entry name" value="CB"/>
    <property type="match status" value="1"/>
</dbReference>
<dbReference type="PROSITE" id="PS51898">
    <property type="entry name" value="TYR_RECOMBINASE"/>
    <property type="match status" value="1"/>
</dbReference>
<comment type="function">
    <text evidence="1">Site-specific tyrosine recombinase, which acts by catalyzing the cutting and rejoining of the recombining DNA molecules. The XerC-XerD complex is essential to convert dimers of the bacterial chromosome into monomers to permit their segregation at cell division. It also contributes to the segregational stability of plasmids.</text>
</comment>
<comment type="subunit">
    <text evidence="1">Forms a cyclic heterotetrameric complex composed of two molecules of XerC and two molecules of XerD.</text>
</comment>
<comment type="subcellular location">
    <subcellularLocation>
        <location evidence="1">Cytoplasm</location>
    </subcellularLocation>
</comment>
<comment type="similarity">
    <text evidence="1">Belongs to the 'phage' integrase family. XerC subfamily.</text>
</comment>
<protein>
    <recommendedName>
        <fullName evidence="1">Tyrosine recombinase XerC</fullName>
    </recommendedName>
</protein>
<sequence length="300" mass="35049">MTQEGQLEKRFLDYLHSERNYSEHTSTAYENDLSDFRRFLNEQAIIEYQQVTFLDVRIYLTELKQKSFSRTTVARKISSLRSFYTFLLRENVITENPFTYVSHAKNQLRLPKFFYSEEMEALFQVVYEDNETLTLRDRVILEVLYGTGIRVSECAGIMLSDLDTSYQAILIRGKGNKERYVPFGAYAEDAITDYLSGRIELMTRFKKTHDSLLINHYGDPLTTRGIRYCLTKIISKASLTRKIHPHMLRHTFATDLLNNGADMRTVQELLGHASLSSTQIYTHVTKEHLKSTYMKHHPRA</sequence>
<keyword id="KW-0131">Cell cycle</keyword>
<keyword id="KW-0132">Cell division</keyword>
<keyword id="KW-0159">Chromosome partition</keyword>
<keyword id="KW-0963">Cytoplasm</keyword>
<keyword id="KW-0229">DNA integration</keyword>
<keyword id="KW-0233">DNA recombination</keyword>
<keyword id="KW-0238">DNA-binding</keyword>
<gene>
    <name evidence="1" type="primary">xerC</name>
    <name type="synonym">codV</name>
    <name type="ordered locus">lin1316</name>
</gene>
<feature type="chain" id="PRO_0000095302" description="Tyrosine recombinase XerC">
    <location>
        <begin position="1"/>
        <end position="300"/>
    </location>
</feature>
<feature type="domain" description="Core-binding (CB)" evidence="3">
    <location>
        <begin position="2"/>
        <end position="88"/>
    </location>
</feature>
<feature type="domain" description="Tyr recombinase" evidence="2">
    <location>
        <begin position="109"/>
        <end position="294"/>
    </location>
</feature>
<feature type="active site" evidence="1">
    <location>
        <position position="150"/>
    </location>
</feature>
<feature type="active site" evidence="1">
    <location>
        <position position="174"/>
    </location>
</feature>
<feature type="active site" evidence="1">
    <location>
        <position position="246"/>
    </location>
</feature>
<feature type="active site" evidence="1">
    <location>
        <position position="249"/>
    </location>
</feature>
<feature type="active site" evidence="1">
    <location>
        <position position="272"/>
    </location>
</feature>
<feature type="active site" description="O-(3'-phospho-DNA)-tyrosine intermediate" evidence="1">
    <location>
        <position position="281"/>
    </location>
</feature>
<evidence type="ECO:0000255" key="1">
    <source>
        <dbReference type="HAMAP-Rule" id="MF_01808"/>
    </source>
</evidence>
<evidence type="ECO:0000255" key="2">
    <source>
        <dbReference type="PROSITE-ProRule" id="PRU01246"/>
    </source>
</evidence>
<evidence type="ECO:0000255" key="3">
    <source>
        <dbReference type="PROSITE-ProRule" id="PRU01248"/>
    </source>
</evidence>
<organism>
    <name type="scientific">Listeria innocua serovar 6a (strain ATCC BAA-680 / CLIP 11262)</name>
    <dbReference type="NCBI Taxonomy" id="272626"/>
    <lineage>
        <taxon>Bacteria</taxon>
        <taxon>Bacillati</taxon>
        <taxon>Bacillota</taxon>
        <taxon>Bacilli</taxon>
        <taxon>Bacillales</taxon>
        <taxon>Listeriaceae</taxon>
        <taxon>Listeria</taxon>
    </lineage>
</organism>
<reference key="1">
    <citation type="journal article" date="2001" name="Science">
        <title>Comparative genomics of Listeria species.</title>
        <authorList>
            <person name="Glaser P."/>
            <person name="Frangeul L."/>
            <person name="Buchrieser C."/>
            <person name="Rusniok C."/>
            <person name="Amend A."/>
            <person name="Baquero F."/>
            <person name="Berche P."/>
            <person name="Bloecker H."/>
            <person name="Brandt P."/>
            <person name="Chakraborty T."/>
            <person name="Charbit A."/>
            <person name="Chetouani F."/>
            <person name="Couve E."/>
            <person name="de Daruvar A."/>
            <person name="Dehoux P."/>
            <person name="Domann E."/>
            <person name="Dominguez-Bernal G."/>
            <person name="Duchaud E."/>
            <person name="Durant L."/>
            <person name="Dussurget O."/>
            <person name="Entian K.-D."/>
            <person name="Fsihi H."/>
            <person name="Garcia-del Portillo F."/>
            <person name="Garrido P."/>
            <person name="Gautier L."/>
            <person name="Goebel W."/>
            <person name="Gomez-Lopez N."/>
            <person name="Hain T."/>
            <person name="Hauf J."/>
            <person name="Jackson D."/>
            <person name="Jones L.-M."/>
            <person name="Kaerst U."/>
            <person name="Kreft J."/>
            <person name="Kuhn M."/>
            <person name="Kunst F."/>
            <person name="Kurapkat G."/>
            <person name="Madueno E."/>
            <person name="Maitournam A."/>
            <person name="Mata Vicente J."/>
            <person name="Ng E."/>
            <person name="Nedjari H."/>
            <person name="Nordsiek G."/>
            <person name="Novella S."/>
            <person name="de Pablos B."/>
            <person name="Perez-Diaz J.-C."/>
            <person name="Purcell R."/>
            <person name="Remmel B."/>
            <person name="Rose M."/>
            <person name="Schlueter T."/>
            <person name="Simoes N."/>
            <person name="Tierrez A."/>
            <person name="Vazquez-Boland J.-A."/>
            <person name="Voss H."/>
            <person name="Wehland J."/>
            <person name="Cossart P."/>
        </authorList>
    </citation>
    <scope>NUCLEOTIDE SEQUENCE [LARGE SCALE GENOMIC DNA]</scope>
    <source>
        <strain>ATCC BAA-680 / CLIP 11262</strain>
    </source>
</reference>
<proteinExistence type="inferred from homology"/>